<protein>
    <recommendedName>
        <fullName evidence="1">Dual-action ribosomal maturation protein DarP</fullName>
    </recommendedName>
    <alternativeName>
        <fullName evidence="1">Large ribosomal subunit assembly factor DarP</fullName>
    </alternativeName>
</protein>
<name>DARP_SALG2</name>
<accession>B5R9H6</accession>
<keyword id="KW-0963">Cytoplasm</keyword>
<keyword id="KW-0690">Ribosome biogenesis</keyword>
<keyword id="KW-0694">RNA-binding</keyword>
<keyword id="KW-0699">rRNA-binding</keyword>
<comment type="function">
    <text evidence="1">Member of a network of 50S ribosomal subunit biogenesis factors which assembles along the 30S-50S interface, preventing incorrect 23S rRNA structures from forming. Promotes peptidyl transferase center (PTC) maturation.</text>
</comment>
<comment type="subcellular location">
    <subcellularLocation>
        <location evidence="1">Cytoplasm</location>
    </subcellularLocation>
    <text evidence="1">Associates with late stage pre-50S ribosomal subunits.</text>
</comment>
<comment type="similarity">
    <text evidence="1">Belongs to the DarP family.</text>
</comment>
<feature type="chain" id="PRO_1000198395" description="Dual-action ribosomal maturation protein DarP">
    <location>
        <begin position="1"/>
        <end position="183"/>
    </location>
</feature>
<organism>
    <name type="scientific">Salmonella gallinarum (strain 287/91 / NCTC 13346)</name>
    <dbReference type="NCBI Taxonomy" id="550538"/>
    <lineage>
        <taxon>Bacteria</taxon>
        <taxon>Pseudomonadati</taxon>
        <taxon>Pseudomonadota</taxon>
        <taxon>Gammaproteobacteria</taxon>
        <taxon>Enterobacterales</taxon>
        <taxon>Enterobacteriaceae</taxon>
        <taxon>Salmonella</taxon>
    </lineage>
</organism>
<sequence length="183" mass="21420">MTKQPEDWLDDVPGDDIEDEDDEIIWVSKSEIKRDAEELKRLGAELVDLGKNALDKIPLDADLRDAIELAQRIKMEGRRRQLQLIGKMLRQRDVEPIRQALDKLKNRHNQQVVLFHKLEHLRDRLIVEGDDAVVEVLTLWPHADRQQLRSLIRNAKKEKEGNKPPKSARQIFQYLRELAENEG</sequence>
<dbReference type="EMBL" id="AM933173">
    <property type="protein sequence ID" value="CAR40024.1"/>
    <property type="molecule type" value="Genomic_DNA"/>
</dbReference>
<dbReference type="SMR" id="B5R9H6"/>
<dbReference type="KEGG" id="seg:SG4262"/>
<dbReference type="HOGENOM" id="CLU_106757_2_0_6"/>
<dbReference type="Proteomes" id="UP000008321">
    <property type="component" value="Chromosome"/>
</dbReference>
<dbReference type="GO" id="GO:0005829">
    <property type="term" value="C:cytosol"/>
    <property type="evidence" value="ECO:0007669"/>
    <property type="project" value="TreeGrafter"/>
</dbReference>
<dbReference type="GO" id="GO:0043022">
    <property type="term" value="F:ribosome binding"/>
    <property type="evidence" value="ECO:0007669"/>
    <property type="project" value="UniProtKB-UniRule"/>
</dbReference>
<dbReference type="GO" id="GO:0019843">
    <property type="term" value="F:rRNA binding"/>
    <property type="evidence" value="ECO:0007669"/>
    <property type="project" value="UniProtKB-UniRule"/>
</dbReference>
<dbReference type="GO" id="GO:1902626">
    <property type="term" value="P:assembly of large subunit precursor of preribosome"/>
    <property type="evidence" value="ECO:0007669"/>
    <property type="project" value="UniProtKB-UniRule"/>
</dbReference>
<dbReference type="CDD" id="cd16331">
    <property type="entry name" value="YjgA-like"/>
    <property type="match status" value="1"/>
</dbReference>
<dbReference type="FunFam" id="1.10.60.30:FF:000001">
    <property type="entry name" value="UPF0307 protein YjgA"/>
    <property type="match status" value="1"/>
</dbReference>
<dbReference type="FunFam" id="1.10.60.30:FF:000002">
    <property type="entry name" value="UPF0307 protein YjgA"/>
    <property type="match status" value="1"/>
</dbReference>
<dbReference type="Gene3D" id="1.10.60.30">
    <property type="entry name" value="PSPTO4464-like domains"/>
    <property type="match status" value="2"/>
</dbReference>
<dbReference type="HAMAP" id="MF_00765">
    <property type="entry name" value="DarP"/>
    <property type="match status" value="1"/>
</dbReference>
<dbReference type="InterPro" id="IPR006839">
    <property type="entry name" value="DarP"/>
</dbReference>
<dbReference type="InterPro" id="IPR023153">
    <property type="entry name" value="DarP_sf"/>
</dbReference>
<dbReference type="NCBIfam" id="NF003593">
    <property type="entry name" value="PRK05255.1-1"/>
    <property type="match status" value="1"/>
</dbReference>
<dbReference type="PANTHER" id="PTHR38101">
    <property type="entry name" value="UPF0307 PROTEIN YJGA"/>
    <property type="match status" value="1"/>
</dbReference>
<dbReference type="PANTHER" id="PTHR38101:SF1">
    <property type="entry name" value="UPF0307 PROTEIN YJGA"/>
    <property type="match status" value="1"/>
</dbReference>
<dbReference type="Pfam" id="PF04751">
    <property type="entry name" value="DarP"/>
    <property type="match status" value="1"/>
</dbReference>
<dbReference type="PIRSF" id="PIRSF016183">
    <property type="entry name" value="UCP016183"/>
    <property type="match status" value="1"/>
</dbReference>
<dbReference type="SUPFAM" id="SSF158710">
    <property type="entry name" value="PSPTO4464-like"/>
    <property type="match status" value="1"/>
</dbReference>
<gene>
    <name evidence="1" type="primary">darP</name>
    <name type="ordered locus">SG4262</name>
</gene>
<evidence type="ECO:0000255" key="1">
    <source>
        <dbReference type="HAMAP-Rule" id="MF_00765"/>
    </source>
</evidence>
<proteinExistence type="inferred from homology"/>
<reference key="1">
    <citation type="journal article" date="2008" name="Genome Res.">
        <title>Comparative genome analysis of Salmonella enteritidis PT4 and Salmonella gallinarum 287/91 provides insights into evolutionary and host adaptation pathways.</title>
        <authorList>
            <person name="Thomson N.R."/>
            <person name="Clayton D.J."/>
            <person name="Windhorst D."/>
            <person name="Vernikos G."/>
            <person name="Davidson S."/>
            <person name="Churcher C."/>
            <person name="Quail M.A."/>
            <person name="Stevens M."/>
            <person name="Jones M.A."/>
            <person name="Watson M."/>
            <person name="Barron A."/>
            <person name="Layton A."/>
            <person name="Pickard D."/>
            <person name="Kingsley R.A."/>
            <person name="Bignell A."/>
            <person name="Clark L."/>
            <person name="Harris B."/>
            <person name="Ormond D."/>
            <person name="Abdellah Z."/>
            <person name="Brooks K."/>
            <person name="Cherevach I."/>
            <person name="Chillingworth T."/>
            <person name="Woodward J."/>
            <person name="Norberczak H."/>
            <person name="Lord A."/>
            <person name="Arrowsmith C."/>
            <person name="Jagels K."/>
            <person name="Moule S."/>
            <person name="Mungall K."/>
            <person name="Saunders M."/>
            <person name="Whitehead S."/>
            <person name="Chabalgoity J.A."/>
            <person name="Maskell D."/>
            <person name="Humphreys T."/>
            <person name="Roberts M."/>
            <person name="Barrow P.A."/>
            <person name="Dougan G."/>
            <person name="Parkhill J."/>
        </authorList>
    </citation>
    <scope>NUCLEOTIDE SEQUENCE [LARGE SCALE GENOMIC DNA]</scope>
    <source>
        <strain>287/91 / NCTC 13346</strain>
    </source>
</reference>